<comment type="miscellaneous">
    <text>This sequence belongs to the VH7183 subfamily.</text>
</comment>
<dbReference type="PIR" id="JT0501">
    <property type="entry name" value="HVMS96"/>
</dbReference>
<dbReference type="SMR" id="P18528"/>
<dbReference type="FunCoup" id="P18528">
    <property type="interactions" value="568"/>
</dbReference>
<dbReference type="MINT" id="P18528"/>
<dbReference type="GlyGen" id="P18528">
    <property type="glycosylation" value="1 site, 1 O-linked glycan (1 site)"/>
</dbReference>
<dbReference type="iPTMnet" id="P18528"/>
<dbReference type="jPOST" id="P18528"/>
<dbReference type="InParanoid" id="P18528"/>
<dbReference type="Proteomes" id="UP000000589">
    <property type="component" value="Unplaced"/>
</dbReference>
<dbReference type="RNAct" id="P18528">
    <property type="molecule type" value="protein"/>
</dbReference>
<dbReference type="GO" id="GO:0005576">
    <property type="term" value="C:extracellular region"/>
    <property type="evidence" value="ECO:0007669"/>
    <property type="project" value="UniProtKB-ARBA"/>
</dbReference>
<dbReference type="GO" id="GO:0019814">
    <property type="term" value="C:immunoglobulin complex"/>
    <property type="evidence" value="ECO:0007669"/>
    <property type="project" value="UniProtKB-KW"/>
</dbReference>
<dbReference type="GO" id="GO:0003823">
    <property type="term" value="F:antigen binding"/>
    <property type="evidence" value="ECO:0000318"/>
    <property type="project" value="GO_Central"/>
</dbReference>
<dbReference type="GO" id="GO:0016064">
    <property type="term" value="P:immunoglobulin mediated immune response"/>
    <property type="evidence" value="ECO:0000318"/>
    <property type="project" value="GO_Central"/>
</dbReference>
<dbReference type="FunFam" id="2.60.40.10:FF:001423">
    <property type="entry name" value="Ig heavy chain V region 5-84"/>
    <property type="match status" value="1"/>
</dbReference>
<dbReference type="Gene3D" id="2.60.40.10">
    <property type="entry name" value="Immunoglobulins"/>
    <property type="match status" value="1"/>
</dbReference>
<dbReference type="InterPro" id="IPR007110">
    <property type="entry name" value="Ig-like_dom"/>
</dbReference>
<dbReference type="InterPro" id="IPR036179">
    <property type="entry name" value="Ig-like_dom_sf"/>
</dbReference>
<dbReference type="InterPro" id="IPR013783">
    <property type="entry name" value="Ig-like_fold"/>
</dbReference>
<dbReference type="InterPro" id="IPR013106">
    <property type="entry name" value="Ig_V-set"/>
</dbReference>
<dbReference type="InterPro" id="IPR050199">
    <property type="entry name" value="IgHV"/>
</dbReference>
<dbReference type="PANTHER" id="PTHR23266">
    <property type="entry name" value="IMMUNOGLOBULIN HEAVY CHAIN"/>
    <property type="match status" value="1"/>
</dbReference>
<dbReference type="Pfam" id="PF07686">
    <property type="entry name" value="V-set"/>
    <property type="match status" value="1"/>
</dbReference>
<dbReference type="SMART" id="SM00406">
    <property type="entry name" value="IGv"/>
    <property type="match status" value="1"/>
</dbReference>
<dbReference type="SUPFAM" id="SSF48726">
    <property type="entry name" value="Immunoglobulin"/>
    <property type="match status" value="1"/>
</dbReference>
<dbReference type="PROSITE" id="PS50835">
    <property type="entry name" value="IG_LIKE"/>
    <property type="match status" value="1"/>
</dbReference>
<accession>P18528</accession>
<keyword id="KW-1064">Adaptive immunity</keyword>
<keyword id="KW-0391">Immunity</keyword>
<keyword id="KW-1280">Immunoglobulin</keyword>
<keyword id="KW-1185">Reference proteome</keyword>
<feature type="chain" id="PRO_0000059900" description="Ig heavy chain V region 6.96">
    <location>
        <begin position="1"/>
        <end position="98" status="greater than"/>
    </location>
</feature>
<feature type="domain" description="Ig-like">
    <location>
        <begin position="1"/>
        <end position="98" status="greater than"/>
    </location>
</feature>
<feature type="non-terminal residue">
    <location>
        <position position="98"/>
    </location>
</feature>
<name>HVM57_MOUSE</name>
<reference key="1">
    <citation type="journal article" date="1989" name="J. Exp. Med.">
        <title>Early onset of somatic mutation in immunoglobulin VH genes during the primary immune response.</title>
        <authorList>
            <person name="Levy N.S."/>
            <person name="Malipiero U.V."/>
            <person name="Lebecque S.G."/>
            <person name="Gearhart P.J."/>
        </authorList>
    </citation>
    <scope>NUCLEOTIDE SEQUENCE</scope>
    <source>
        <strain>BALB/cJ</strain>
    </source>
</reference>
<protein>
    <recommendedName>
        <fullName>Ig heavy chain V region 6.96</fullName>
    </recommendedName>
</protein>
<organism>
    <name type="scientific">Mus musculus</name>
    <name type="common">Mouse</name>
    <dbReference type="NCBI Taxonomy" id="10090"/>
    <lineage>
        <taxon>Eukaryota</taxon>
        <taxon>Metazoa</taxon>
        <taxon>Chordata</taxon>
        <taxon>Craniata</taxon>
        <taxon>Vertebrata</taxon>
        <taxon>Euteleostomi</taxon>
        <taxon>Mammalia</taxon>
        <taxon>Eutheria</taxon>
        <taxon>Euarchontoglires</taxon>
        <taxon>Glires</taxon>
        <taxon>Rodentia</taxon>
        <taxon>Myomorpha</taxon>
        <taxon>Muroidea</taxon>
        <taxon>Muridae</taxon>
        <taxon>Murinae</taxon>
        <taxon>Mus</taxon>
        <taxon>Mus</taxon>
    </lineage>
</organism>
<proteinExistence type="predicted"/>
<sequence>EVQLVESGGGLVKPGGSLKLSCAASGFTFSDYYMYWVRQTPEKRLEWVATISDGGSYTYYPDSVKGRFTISRDNAKNNLYLQMSSLKSEDTAMYYCAR</sequence>